<organism>
    <name type="scientific">Canis lupus familiaris</name>
    <name type="common">Dog</name>
    <name type="synonym">Canis familiaris</name>
    <dbReference type="NCBI Taxonomy" id="9615"/>
    <lineage>
        <taxon>Eukaryota</taxon>
        <taxon>Metazoa</taxon>
        <taxon>Chordata</taxon>
        <taxon>Craniata</taxon>
        <taxon>Vertebrata</taxon>
        <taxon>Euteleostomi</taxon>
        <taxon>Mammalia</taxon>
        <taxon>Eutheria</taxon>
        <taxon>Laurasiatheria</taxon>
        <taxon>Carnivora</taxon>
        <taxon>Caniformia</taxon>
        <taxon>Canidae</taxon>
        <taxon>Canis</taxon>
    </lineage>
</organism>
<feature type="signal peptide" evidence="2">
    <location>
        <begin position="1"/>
        <end position="21"/>
    </location>
</feature>
<feature type="chain" id="PRO_0000014636" description="T-cell surface glycoprotein CD8 alpha chain">
    <location>
        <begin position="22"/>
        <end position="239"/>
    </location>
</feature>
<feature type="topological domain" description="Extracellular" evidence="2">
    <location>
        <begin position="22"/>
        <end position="186"/>
    </location>
</feature>
<feature type="transmembrane region" description="Helical" evidence="2">
    <location>
        <begin position="187"/>
        <end position="210"/>
    </location>
</feature>
<feature type="topological domain" description="Cytoplasmic" evidence="2">
    <location>
        <begin position="211"/>
        <end position="239"/>
    </location>
</feature>
<feature type="domain" description="Ig-like V-type">
    <location>
        <begin position="25"/>
        <end position="139"/>
    </location>
</feature>
<feature type="region of interest" description="Disordered" evidence="4">
    <location>
        <begin position="143"/>
        <end position="169"/>
    </location>
</feature>
<feature type="compositionally biased region" description="Pro residues" evidence="4">
    <location>
        <begin position="143"/>
        <end position="152"/>
    </location>
</feature>
<feature type="lipid moiety-binding region" description="S-palmitoyl cysteine" evidence="1">
    <location>
        <position position="210"/>
    </location>
</feature>
<feature type="glycosylation site" description="N-linked (GlcNAc...) asparagine" evidence="2">
    <location>
        <position position="156"/>
    </location>
</feature>
<feature type="disulfide bond" evidence="3">
    <location>
        <begin position="46"/>
        <end position="119"/>
    </location>
</feature>
<gene>
    <name type="primary">CD8A</name>
</gene>
<sequence length="239" mass="26036">MASRVTALLLPLALLLRAAAASGPSRFRMTPPKVVGQLHAQVELQCQVLLSTAAPGCSWLYQRNEPAARPVFLMYISQSRAKPAEGLDTKHISGQKKTDSTYSLTLSRFRKEDEGYYFCSVLSNSILYFSPFVPVFLPVKPPTTPAPRPPTRAPTNASKPVSPRGETCRPAAGSAVKTSGLDFACEIYIWAPLAGTCAVLLLSLVITIICNHRNRRRVCKCPRPVVRPGGKPSPSEKYV</sequence>
<accession>P33706</accession>
<comment type="function">
    <text evidence="1">Integral membrane glycoprotein that plays an essential role in the immune response and serves multiple functions in responses against both external and internal offenses. In T-cells, functions primarily as a coreceptor for MHC class I molecule:peptide complex. The antigens presented by class I peptides are derived from cytosolic proteins while class II derived from extracellular proteins. Interacts simultaneously with the T-cell receptor (TCR) and the MHC class I proteins presented by antigen presenting cells (APCs). In turn, recruits the Src kinase LCK to the vicinity of the TCR-CD3 complex. LCK then initiates different intracellular signaling pathways by phosphorylating various substrates ultimately leading to lymphokine production, motility, adhesion and activation of cytotoxic T-lymphocytes (CTLs). This mechanism enables CTLs to recognize and eliminate infected cells and tumor cells. In NK-cells, the presence of CD8A homodimers at the cell surface provides a survival mechanism allowing conjugation and lysis of multiple target cells. CD8A homodimer molecules also promote the survival and differentiation of activated lymphocytes into memory CD8 T-cells.</text>
</comment>
<comment type="subunit">
    <text evidence="1">Forms disulfide-linked heterodimers with CD8B at the cell surface. Also forms homodimers in several cell types including NK-cells or peripheral blood T-lymphocytes. Interacts with the MHC class I HLA-A/B2M dimer. Interacts with LCK in a zinc-dependent manner.</text>
</comment>
<comment type="subcellular location">
    <subcellularLocation>
        <location evidence="1">Cell membrane</location>
        <topology evidence="1">Single-pass type I membrane protein</topology>
    </subcellularLocation>
    <text evidence="1">CD8A localizes to lipid rafts only when associated with its partner CD8B.</text>
</comment>
<comment type="PTM">
    <text evidence="1">Palmitoylated, but association with CD8B seems to be more important for the enrichment of CD8A in lipid rafts.</text>
</comment>
<comment type="PTM">
    <text evidence="1">O-glycosylated.</text>
</comment>
<comment type="PTM">
    <text evidence="1">Phosphorylated in cytotoxic T-lymphocytes (CTLs) following activation.</text>
</comment>
<keyword id="KW-1064">Adaptive immunity</keyword>
<keyword id="KW-1003">Cell membrane</keyword>
<keyword id="KW-1015">Disulfide bond</keyword>
<keyword id="KW-0325">Glycoprotein</keyword>
<keyword id="KW-0391">Immunity</keyword>
<keyword id="KW-0393">Immunoglobulin domain</keyword>
<keyword id="KW-0449">Lipoprotein</keyword>
<keyword id="KW-0472">Membrane</keyword>
<keyword id="KW-0564">Palmitate</keyword>
<keyword id="KW-1185">Reference proteome</keyword>
<keyword id="KW-0732">Signal</keyword>
<keyword id="KW-0812">Transmembrane</keyword>
<keyword id="KW-1133">Transmembrane helix</keyword>
<reference key="1">
    <citation type="journal article" date="1994" name="Tissue Antigens">
        <title>Isolation and expression of cDNA encoding the canine CD4 and CD8 alpha antigens.</title>
        <authorList>
            <person name="Gorman S.D."/>
            <person name="Frewin M.R."/>
            <person name="Cobbold S.P."/>
            <person name="Waldmann H."/>
        </authorList>
    </citation>
    <scope>NUCLEOTIDE SEQUENCE [MRNA]</scope>
    <source>
        <strain>Beagle</strain>
        <tissue>Thymus</tissue>
    </source>
</reference>
<proteinExistence type="evidence at transcript level"/>
<evidence type="ECO:0000250" key="1">
    <source>
        <dbReference type="UniProtKB" id="P01732"/>
    </source>
</evidence>
<evidence type="ECO:0000255" key="2"/>
<evidence type="ECO:0000255" key="3">
    <source>
        <dbReference type="PROSITE-ProRule" id="PRU00114"/>
    </source>
</evidence>
<evidence type="ECO:0000256" key="4">
    <source>
        <dbReference type="SAM" id="MobiDB-lite"/>
    </source>
</evidence>
<protein>
    <recommendedName>
        <fullName>T-cell surface glycoprotein CD8 alpha chain</fullName>
    </recommendedName>
    <cdAntigenName>CD8a</cdAntigenName>
</protein>
<dbReference type="EMBL" id="L14287">
    <property type="protein sequence ID" value="AAB02294.1"/>
    <property type="molecule type" value="mRNA"/>
</dbReference>
<dbReference type="RefSeq" id="NP_001002935.1">
    <property type="nucleotide sequence ID" value="NM_001002935.2"/>
</dbReference>
<dbReference type="SMR" id="P33706"/>
<dbReference type="FunCoup" id="P33706">
    <property type="interactions" value="161"/>
</dbReference>
<dbReference type="STRING" id="9615.ENSCAFP00000063962"/>
<dbReference type="GlyCosmos" id="P33706">
    <property type="glycosylation" value="1 site, No reported glycans"/>
</dbReference>
<dbReference type="PaxDb" id="9612-ENSCAFP00000011083"/>
<dbReference type="Ensembl" id="ENSCAFT00000064515.2">
    <property type="protein sequence ID" value="ENSCAFP00000063493.2"/>
    <property type="gene ID" value="ENSCAFG00000007464.5"/>
</dbReference>
<dbReference type="Ensembl" id="ENSCAFT00030012805.1">
    <property type="protein sequence ID" value="ENSCAFP00030011196.1"/>
    <property type="gene ID" value="ENSCAFG00030006889.1"/>
</dbReference>
<dbReference type="Ensembl" id="ENSCAFT00040028987.1">
    <property type="protein sequence ID" value="ENSCAFP00040025182.1"/>
    <property type="gene ID" value="ENSCAFG00040015717.1"/>
</dbReference>
<dbReference type="Ensembl" id="ENSCAFT00845023463.1">
    <property type="protein sequence ID" value="ENSCAFP00845018419.1"/>
    <property type="gene ID" value="ENSCAFG00845013158.1"/>
</dbReference>
<dbReference type="GeneID" id="403157"/>
<dbReference type="KEGG" id="cfa:403157"/>
<dbReference type="CTD" id="925"/>
<dbReference type="VEuPathDB" id="HostDB:ENSCAFG00845013158"/>
<dbReference type="VGNC" id="VGNC:38980">
    <property type="gene designation" value="CD8A"/>
</dbReference>
<dbReference type="eggNOG" id="ENOG502SAZN">
    <property type="taxonomic scope" value="Eukaryota"/>
</dbReference>
<dbReference type="GeneTree" id="ENSGT00940000156588"/>
<dbReference type="HOGENOM" id="CLU_085753_0_0_1"/>
<dbReference type="InParanoid" id="P33706"/>
<dbReference type="OMA" id="KCKCIRP"/>
<dbReference type="OrthoDB" id="9906515at2759"/>
<dbReference type="TreeFam" id="TF336070"/>
<dbReference type="Reactome" id="R-CFA-198933">
    <property type="pathway name" value="Immunoregulatory interactions between a Lymphoid and a non-Lymphoid cell"/>
</dbReference>
<dbReference type="Proteomes" id="UP000002254">
    <property type="component" value="Chromosome 17"/>
</dbReference>
<dbReference type="Proteomes" id="UP000694429">
    <property type="component" value="Chromosome 17"/>
</dbReference>
<dbReference type="Proteomes" id="UP000694542">
    <property type="component" value="Chromosome 17"/>
</dbReference>
<dbReference type="Proteomes" id="UP000805418">
    <property type="component" value="Chromosome 17"/>
</dbReference>
<dbReference type="GO" id="GO:0005886">
    <property type="term" value="C:plasma membrane"/>
    <property type="evidence" value="ECO:0007669"/>
    <property type="project" value="UniProtKB-SubCell"/>
</dbReference>
<dbReference type="GO" id="GO:0002250">
    <property type="term" value="P:adaptive immune response"/>
    <property type="evidence" value="ECO:0007669"/>
    <property type="project" value="UniProtKB-KW"/>
</dbReference>
<dbReference type="FunFam" id="2.60.40.10:FF:000956">
    <property type="entry name" value="T-cell surface glycoprotein CD8 alpha chain"/>
    <property type="match status" value="1"/>
</dbReference>
<dbReference type="Gene3D" id="2.60.40.10">
    <property type="entry name" value="Immunoglobulins"/>
    <property type="match status" value="1"/>
</dbReference>
<dbReference type="InterPro" id="IPR015468">
    <property type="entry name" value="CD8_asu"/>
</dbReference>
<dbReference type="InterPro" id="IPR007110">
    <property type="entry name" value="Ig-like_dom"/>
</dbReference>
<dbReference type="InterPro" id="IPR036179">
    <property type="entry name" value="Ig-like_dom_sf"/>
</dbReference>
<dbReference type="InterPro" id="IPR013783">
    <property type="entry name" value="Ig-like_fold"/>
</dbReference>
<dbReference type="InterPro" id="IPR003599">
    <property type="entry name" value="Ig_sub"/>
</dbReference>
<dbReference type="InterPro" id="IPR013106">
    <property type="entry name" value="Ig_V-set"/>
</dbReference>
<dbReference type="PANTHER" id="PTHR10441">
    <property type="entry name" value="CD8 ALPHA CHAIN"/>
    <property type="match status" value="1"/>
</dbReference>
<dbReference type="PANTHER" id="PTHR10441:SF2">
    <property type="entry name" value="T-CELL SURFACE GLYCOPROTEIN CD8 ALPHA CHAIN"/>
    <property type="match status" value="1"/>
</dbReference>
<dbReference type="Pfam" id="PF07686">
    <property type="entry name" value="V-set"/>
    <property type="match status" value="1"/>
</dbReference>
<dbReference type="SMART" id="SM00409">
    <property type="entry name" value="IG"/>
    <property type="match status" value="1"/>
</dbReference>
<dbReference type="SMART" id="SM00406">
    <property type="entry name" value="IGv"/>
    <property type="match status" value="1"/>
</dbReference>
<dbReference type="SUPFAM" id="SSF48726">
    <property type="entry name" value="Immunoglobulin"/>
    <property type="match status" value="1"/>
</dbReference>
<dbReference type="PROSITE" id="PS50835">
    <property type="entry name" value="IG_LIKE"/>
    <property type="match status" value="1"/>
</dbReference>
<name>CD8A_CANLF</name>